<comment type="function">
    <text evidence="1">One of the early assembly proteins it binds 23S rRNA. One of the proteins that surrounds the polypeptide exit tunnel on the outside of the ribosome. Forms the main docking site for trigger factor binding to the ribosome.</text>
</comment>
<comment type="subunit">
    <text evidence="1">Part of the 50S ribosomal subunit. Contacts protein L29, and trigger factor when it is bound to the ribosome.</text>
</comment>
<comment type="similarity">
    <text evidence="1">Belongs to the universal ribosomal protein uL23 family.</text>
</comment>
<comment type="sequence caution" evidence="2">
    <conflict type="erroneous initiation">
        <sequence resource="EMBL-CDS" id="ABI41202"/>
    </conflict>
</comment>
<organism>
    <name type="scientific">Shewanella sp. (strain MR-7)</name>
    <dbReference type="NCBI Taxonomy" id="60481"/>
    <lineage>
        <taxon>Bacteria</taxon>
        <taxon>Pseudomonadati</taxon>
        <taxon>Pseudomonadota</taxon>
        <taxon>Gammaproteobacteria</taxon>
        <taxon>Alteromonadales</taxon>
        <taxon>Shewanellaceae</taxon>
        <taxon>Shewanella</taxon>
    </lineage>
</organism>
<feature type="chain" id="PRO_0000272843" description="Large ribosomal subunit protein uL23">
    <location>
        <begin position="1"/>
        <end position="100"/>
    </location>
</feature>
<reference key="1">
    <citation type="submission" date="2006-08" db="EMBL/GenBank/DDBJ databases">
        <title>Complete sequence of chromosome 1 of Shewanella sp. MR-7.</title>
        <authorList>
            <person name="Copeland A."/>
            <person name="Lucas S."/>
            <person name="Lapidus A."/>
            <person name="Barry K."/>
            <person name="Detter J.C."/>
            <person name="Glavina del Rio T."/>
            <person name="Hammon N."/>
            <person name="Israni S."/>
            <person name="Dalin E."/>
            <person name="Tice H."/>
            <person name="Pitluck S."/>
            <person name="Kiss H."/>
            <person name="Brettin T."/>
            <person name="Bruce D."/>
            <person name="Han C."/>
            <person name="Tapia R."/>
            <person name="Gilna P."/>
            <person name="Schmutz J."/>
            <person name="Larimer F."/>
            <person name="Land M."/>
            <person name="Hauser L."/>
            <person name="Kyrpides N."/>
            <person name="Mikhailova N."/>
            <person name="Nealson K."/>
            <person name="Konstantinidis K."/>
            <person name="Klappenbach J."/>
            <person name="Tiedje J."/>
            <person name="Richardson P."/>
        </authorList>
    </citation>
    <scope>NUCLEOTIDE SEQUENCE [LARGE SCALE GENOMIC DNA]</scope>
    <source>
        <strain>MR-7</strain>
    </source>
</reference>
<protein>
    <recommendedName>
        <fullName evidence="1">Large ribosomal subunit protein uL23</fullName>
    </recommendedName>
    <alternativeName>
        <fullName evidence="2">50S ribosomal protein L23</fullName>
    </alternativeName>
</protein>
<gene>
    <name evidence="1" type="primary">rplW</name>
    <name type="ordered locus">Shewmr7_0196</name>
</gene>
<sequence>MIREERLLKVILAPHISEKSTVNAEKHNTVVFRVAIDATKAEIKAAVAKLFEVEVESVRTLVSKGKTKRTGGRVGRRSDWKKAYVTLAAGADIDFVGGAE</sequence>
<dbReference type="EMBL" id="CP000444">
    <property type="protein sequence ID" value="ABI41202.1"/>
    <property type="status" value="ALT_INIT"/>
    <property type="molecule type" value="Genomic_DNA"/>
</dbReference>
<dbReference type="SMR" id="Q0I0A3"/>
<dbReference type="KEGG" id="shm:Shewmr7_0196"/>
<dbReference type="HOGENOM" id="CLU_037562_3_1_6"/>
<dbReference type="GO" id="GO:1990904">
    <property type="term" value="C:ribonucleoprotein complex"/>
    <property type="evidence" value="ECO:0007669"/>
    <property type="project" value="UniProtKB-KW"/>
</dbReference>
<dbReference type="GO" id="GO:0005840">
    <property type="term" value="C:ribosome"/>
    <property type="evidence" value="ECO:0007669"/>
    <property type="project" value="UniProtKB-KW"/>
</dbReference>
<dbReference type="GO" id="GO:0019843">
    <property type="term" value="F:rRNA binding"/>
    <property type="evidence" value="ECO:0007669"/>
    <property type="project" value="UniProtKB-UniRule"/>
</dbReference>
<dbReference type="GO" id="GO:0003735">
    <property type="term" value="F:structural constituent of ribosome"/>
    <property type="evidence" value="ECO:0007669"/>
    <property type="project" value="InterPro"/>
</dbReference>
<dbReference type="GO" id="GO:0006412">
    <property type="term" value="P:translation"/>
    <property type="evidence" value="ECO:0007669"/>
    <property type="project" value="UniProtKB-UniRule"/>
</dbReference>
<dbReference type="FunFam" id="3.30.70.330:FF:000001">
    <property type="entry name" value="50S ribosomal protein L23"/>
    <property type="match status" value="1"/>
</dbReference>
<dbReference type="Gene3D" id="3.30.70.330">
    <property type="match status" value="1"/>
</dbReference>
<dbReference type="HAMAP" id="MF_01369_B">
    <property type="entry name" value="Ribosomal_uL23_B"/>
    <property type="match status" value="1"/>
</dbReference>
<dbReference type="InterPro" id="IPR012677">
    <property type="entry name" value="Nucleotide-bd_a/b_plait_sf"/>
</dbReference>
<dbReference type="InterPro" id="IPR013025">
    <property type="entry name" value="Ribosomal_uL23-like"/>
</dbReference>
<dbReference type="InterPro" id="IPR012678">
    <property type="entry name" value="Ribosomal_uL23/eL15/eS24_sf"/>
</dbReference>
<dbReference type="InterPro" id="IPR001014">
    <property type="entry name" value="Ribosomal_uL23_CS"/>
</dbReference>
<dbReference type="NCBIfam" id="NF004358">
    <property type="entry name" value="PRK05738.1-1"/>
    <property type="match status" value="1"/>
</dbReference>
<dbReference type="NCBIfam" id="NF004359">
    <property type="entry name" value="PRK05738.1-3"/>
    <property type="match status" value="1"/>
</dbReference>
<dbReference type="NCBIfam" id="NF004363">
    <property type="entry name" value="PRK05738.2-4"/>
    <property type="match status" value="1"/>
</dbReference>
<dbReference type="PANTHER" id="PTHR11620">
    <property type="entry name" value="60S RIBOSOMAL PROTEIN L23A"/>
    <property type="match status" value="1"/>
</dbReference>
<dbReference type="Pfam" id="PF00276">
    <property type="entry name" value="Ribosomal_L23"/>
    <property type="match status" value="1"/>
</dbReference>
<dbReference type="SUPFAM" id="SSF54189">
    <property type="entry name" value="Ribosomal proteins S24e, L23 and L15e"/>
    <property type="match status" value="1"/>
</dbReference>
<dbReference type="PROSITE" id="PS00050">
    <property type="entry name" value="RIBOSOMAL_L23"/>
    <property type="match status" value="1"/>
</dbReference>
<evidence type="ECO:0000255" key="1">
    <source>
        <dbReference type="HAMAP-Rule" id="MF_01369"/>
    </source>
</evidence>
<evidence type="ECO:0000305" key="2"/>
<keyword id="KW-0687">Ribonucleoprotein</keyword>
<keyword id="KW-0689">Ribosomal protein</keyword>
<keyword id="KW-0694">RNA-binding</keyword>
<keyword id="KW-0699">rRNA-binding</keyword>
<proteinExistence type="inferred from homology"/>
<name>RL23_SHESR</name>
<accession>Q0I0A3</accession>